<accession>P46562</accession>
<dbReference type="EC" id="1.2.1.3"/>
<dbReference type="EMBL" id="BX284603">
    <property type="protein sequence ID" value="CCD65988.1"/>
    <property type="molecule type" value="Genomic_DNA"/>
</dbReference>
<dbReference type="PIR" id="T15944">
    <property type="entry name" value="T15944"/>
</dbReference>
<dbReference type="RefSeq" id="NP_498263.2">
    <property type="nucleotide sequence ID" value="NM_065862.7"/>
</dbReference>
<dbReference type="SMR" id="P46562"/>
<dbReference type="BioGRID" id="41042">
    <property type="interactions" value="43"/>
</dbReference>
<dbReference type="DIP" id="DIP-25437N"/>
<dbReference type="FunCoup" id="P46562">
    <property type="interactions" value="1465"/>
</dbReference>
<dbReference type="IntAct" id="P46562">
    <property type="interactions" value="2"/>
</dbReference>
<dbReference type="STRING" id="6239.F01F1.6.2"/>
<dbReference type="iPTMnet" id="P46562"/>
<dbReference type="PaxDb" id="6239-F01F1.6.2"/>
<dbReference type="PeptideAtlas" id="P46562"/>
<dbReference type="EnsemblMetazoa" id="F01F1.6.1">
    <property type="protein sequence ID" value="F01F1.6.1"/>
    <property type="gene ID" value="WBGene00000115"/>
</dbReference>
<dbReference type="EnsemblMetazoa" id="F01F1.6.2">
    <property type="protein sequence ID" value="F01F1.6.2"/>
    <property type="gene ID" value="WBGene00000115"/>
</dbReference>
<dbReference type="GeneID" id="175820"/>
<dbReference type="KEGG" id="cel:CELE_F01F1.6"/>
<dbReference type="UCSC" id="F01F1.6.1">
    <property type="organism name" value="c. elegans"/>
</dbReference>
<dbReference type="AGR" id="WB:WBGene00000115"/>
<dbReference type="CTD" id="175820"/>
<dbReference type="WormBase" id="F01F1.6">
    <property type="protein sequence ID" value="CE39486"/>
    <property type="gene ID" value="WBGene00000115"/>
    <property type="gene designation" value="alh-9"/>
</dbReference>
<dbReference type="eggNOG" id="KOG2453">
    <property type="taxonomic scope" value="Eukaryota"/>
</dbReference>
<dbReference type="GeneTree" id="ENSGT00940000154938"/>
<dbReference type="HOGENOM" id="CLU_005391_1_2_1"/>
<dbReference type="InParanoid" id="P46562"/>
<dbReference type="OMA" id="DAWKVYM"/>
<dbReference type="OrthoDB" id="310895at2759"/>
<dbReference type="PhylomeDB" id="P46562"/>
<dbReference type="Reactome" id="R-CEL-6798163">
    <property type="pathway name" value="Choline catabolism"/>
</dbReference>
<dbReference type="Reactome" id="R-CEL-71064">
    <property type="pathway name" value="Lysine catabolism"/>
</dbReference>
<dbReference type="SignaLink" id="P46562"/>
<dbReference type="PRO" id="PR:P46562"/>
<dbReference type="Proteomes" id="UP000001940">
    <property type="component" value="Chromosome III"/>
</dbReference>
<dbReference type="Bgee" id="WBGene00000115">
    <property type="expression patterns" value="Expressed in adult organism and 4 other cell types or tissues"/>
</dbReference>
<dbReference type="GO" id="GO:0004029">
    <property type="term" value="F:aldehyde dehydrogenase (NAD+) activity"/>
    <property type="evidence" value="ECO:0000250"/>
    <property type="project" value="UniProtKB"/>
</dbReference>
<dbReference type="GO" id="GO:0006081">
    <property type="term" value="P:aldehyde metabolic process"/>
    <property type="evidence" value="ECO:0000250"/>
    <property type="project" value="UniProtKB"/>
</dbReference>
<dbReference type="CDD" id="cd07130">
    <property type="entry name" value="ALDH_F7_AASADH"/>
    <property type="match status" value="1"/>
</dbReference>
<dbReference type="FunFam" id="3.40.309.10:FF:000018">
    <property type="entry name" value="Alpha-aminoadipic semialdehyde dehydrogenase"/>
    <property type="match status" value="1"/>
</dbReference>
<dbReference type="Gene3D" id="3.40.605.10">
    <property type="entry name" value="Aldehyde Dehydrogenase, Chain A, domain 1"/>
    <property type="match status" value="1"/>
</dbReference>
<dbReference type="Gene3D" id="3.40.309.10">
    <property type="entry name" value="Aldehyde Dehydrogenase, Chain A, domain 2"/>
    <property type="match status" value="1"/>
</dbReference>
<dbReference type="InterPro" id="IPR016161">
    <property type="entry name" value="Ald_DH/histidinol_DH"/>
</dbReference>
<dbReference type="InterPro" id="IPR016163">
    <property type="entry name" value="Ald_DH_C"/>
</dbReference>
<dbReference type="InterPro" id="IPR029510">
    <property type="entry name" value="Ald_DH_CS_GLU"/>
</dbReference>
<dbReference type="InterPro" id="IPR016162">
    <property type="entry name" value="Ald_DH_N"/>
</dbReference>
<dbReference type="InterPro" id="IPR015590">
    <property type="entry name" value="Aldehyde_DH_dom"/>
</dbReference>
<dbReference type="InterPro" id="IPR044638">
    <property type="entry name" value="ALDH7A1-like"/>
</dbReference>
<dbReference type="PANTHER" id="PTHR43521">
    <property type="entry name" value="ALPHA-AMINOADIPIC SEMIALDEHYDE DEHYDROGENASE"/>
    <property type="match status" value="1"/>
</dbReference>
<dbReference type="PANTHER" id="PTHR43521:SF1">
    <property type="entry name" value="ALPHA-AMINOADIPIC SEMIALDEHYDE DEHYDROGENASE"/>
    <property type="match status" value="1"/>
</dbReference>
<dbReference type="Pfam" id="PF00171">
    <property type="entry name" value="Aldedh"/>
    <property type="match status" value="1"/>
</dbReference>
<dbReference type="SUPFAM" id="SSF53720">
    <property type="entry name" value="ALDH-like"/>
    <property type="match status" value="1"/>
</dbReference>
<dbReference type="PROSITE" id="PS00687">
    <property type="entry name" value="ALDEHYDE_DEHYDR_GLU"/>
    <property type="match status" value="1"/>
</dbReference>
<comment type="catalytic activity">
    <reaction>
        <text>an aldehyde + NAD(+) + H2O = a carboxylate + NADH + 2 H(+)</text>
        <dbReference type="Rhea" id="RHEA:16185"/>
        <dbReference type="ChEBI" id="CHEBI:15377"/>
        <dbReference type="ChEBI" id="CHEBI:15378"/>
        <dbReference type="ChEBI" id="CHEBI:17478"/>
        <dbReference type="ChEBI" id="CHEBI:29067"/>
        <dbReference type="ChEBI" id="CHEBI:57540"/>
        <dbReference type="ChEBI" id="CHEBI:57945"/>
        <dbReference type="EC" id="1.2.1.3"/>
    </reaction>
</comment>
<comment type="subunit">
    <text evidence="1">Homotetramer.</text>
</comment>
<comment type="similarity">
    <text evidence="3">Belongs to the aldehyde dehydrogenase family.</text>
</comment>
<keyword id="KW-0520">NAD</keyword>
<keyword id="KW-0560">Oxidoreductase</keyword>
<keyword id="KW-1185">Reference proteome</keyword>
<protein>
    <recommendedName>
        <fullName>Putative aldehyde dehydrogenase family 7 member A1 homolog</fullName>
        <ecNumber>1.2.1.3</ecNumber>
    </recommendedName>
    <alternativeName>
        <fullName>ALH-9</fullName>
    </alternativeName>
</protein>
<feature type="chain" id="PRO_0000056499" description="Putative aldehyde dehydrogenase family 7 member A1 homolog">
    <location>
        <begin position="1"/>
        <end position="531"/>
    </location>
</feature>
<feature type="active site" description="Proton acceptor" evidence="2">
    <location>
        <position position="286"/>
    </location>
</feature>
<feature type="active site" description="Nucleophile" evidence="2">
    <location>
        <position position="320"/>
    </location>
</feature>
<feature type="binding site" evidence="1">
    <location>
        <begin position="264"/>
        <end position="269"/>
    </location>
    <ligand>
        <name>NAD(+)</name>
        <dbReference type="ChEBI" id="CHEBI:57540"/>
    </ligand>
</feature>
<feature type="site" description="Transition state stabilizer" evidence="1">
    <location>
        <position position="185"/>
    </location>
</feature>
<reference key="1">
    <citation type="journal article" date="1998" name="Science">
        <title>Genome sequence of the nematode C. elegans: a platform for investigating biology.</title>
        <authorList>
            <consortium name="The C. elegans sequencing consortium"/>
        </authorList>
    </citation>
    <scope>NUCLEOTIDE SEQUENCE [LARGE SCALE GENOMIC DNA]</scope>
    <source>
        <strain>Bristol N2</strain>
    </source>
</reference>
<gene>
    <name type="primary">alh-9</name>
    <name type="ORF">F01F1.6</name>
</gene>
<name>AL7A1_CAEEL</name>
<evidence type="ECO:0000250" key="1"/>
<evidence type="ECO:0000255" key="2">
    <source>
        <dbReference type="PROSITE-ProRule" id="PRU10007"/>
    </source>
</evidence>
<evidence type="ECO:0000305" key="3"/>
<organism>
    <name type="scientific">Caenorhabditis elegans</name>
    <dbReference type="NCBI Taxonomy" id="6239"/>
    <lineage>
        <taxon>Eukaryota</taxon>
        <taxon>Metazoa</taxon>
        <taxon>Ecdysozoa</taxon>
        <taxon>Nematoda</taxon>
        <taxon>Chromadorea</taxon>
        <taxon>Rhabditida</taxon>
        <taxon>Rhabditina</taxon>
        <taxon>Rhabditomorpha</taxon>
        <taxon>Rhabditoidea</taxon>
        <taxon>Rhabditidae</taxon>
        <taxon>Peloderinae</taxon>
        <taxon>Caenorhabditis</taxon>
    </lineage>
</organism>
<sequence length="531" mass="57013">MNRLLSSGMSAATLQTRMASQLLINDSKYGFLKELGLTENNAGVFHGKWAASGQVVQSFAPANNSPIANVQNGNVQDYEIAISEAKKAYNDWCEVPAPRRGEIVRQIGDKLRTQLQNLGKLVSLEMGKISAEGVGEVQEYVDICDYATGLSRSLEGKIFPSERPGHALLEQWNPLGVVGVISAFNFPCAVYGWNNALALVTGNSVVWKPAPSTPLTAIAVTKLVEEVLVANNVNPALCSLVCGEGDVGQALVKDKRVNLVSFTGSSEIGKIVGQQVQARFGKLLLELGGNNAIIVNEDADLNMVVPATVFAAVGTAGQRCTTTRRLIVHDKVYDQVLERLKKAYAQFESRIGCPLDSNTIIGPLHNQQAVGKYKASVAEAVASGGKIEYGGKVLERDGNFVLPTIVTGLKHDSPVVLRETFAPILYVLKFSTLEEAIAINNEVDQGLSSSLFTTNIQNVFKWMGPKGSDCGIVNVNIPTSGAEIGGAFGGEKETGGGRESGSDSWRQYMRRSTCTINYSKELPLAQGIKFE</sequence>
<proteinExistence type="inferred from homology"/>